<name>TMM19_XENLA</name>
<sequence>MLFIQDELYKEYVKMMMNIVILCMILSISLSFWMISITASTYSGTLRPISPWRWLVSLLTPIIIVSHGIKKRSLDSSGALGGLLVGFILTIANYSFFSALLAFFFISSKLTKWRGEVKKCYDSEYKEGGQRNWVQVFCNGGLPAELALLYMIENGPGEIPIDFSKEYTASWMCLSLLGALSCSAGDTWASEIGPVLSKSAPRLITTWEKVPVGTNGGVTPIGLISSLLGGISVGVAYFVTQLVFVDDLEIAAPQWPIVIYGGMAGLLGSLIDSYLGAIMQYSGYDESTGKIVNHPTKDAKFICGKPILDNNAVNLFSSILIALLLPTAAWSFWPRL</sequence>
<gene>
    <name type="primary">tmem19</name>
</gene>
<protein>
    <recommendedName>
        <fullName>Transmembrane protein 19</fullName>
    </recommendedName>
</protein>
<organism>
    <name type="scientific">Xenopus laevis</name>
    <name type="common">African clawed frog</name>
    <dbReference type="NCBI Taxonomy" id="8355"/>
    <lineage>
        <taxon>Eukaryota</taxon>
        <taxon>Metazoa</taxon>
        <taxon>Chordata</taxon>
        <taxon>Craniata</taxon>
        <taxon>Vertebrata</taxon>
        <taxon>Euteleostomi</taxon>
        <taxon>Amphibia</taxon>
        <taxon>Batrachia</taxon>
        <taxon>Anura</taxon>
        <taxon>Pipoidea</taxon>
        <taxon>Pipidae</taxon>
        <taxon>Xenopodinae</taxon>
        <taxon>Xenopus</taxon>
        <taxon>Xenopus</taxon>
    </lineage>
</organism>
<comment type="subcellular location">
    <subcellularLocation>
        <location evidence="2">Membrane</location>
        <topology evidence="2">Multi-pass membrane protein</topology>
    </subcellularLocation>
</comment>
<comment type="similarity">
    <text evidence="2">Belongs to the TMEM19 family.</text>
</comment>
<keyword id="KW-0472">Membrane</keyword>
<keyword id="KW-1185">Reference proteome</keyword>
<keyword id="KW-0812">Transmembrane</keyword>
<keyword id="KW-1133">Transmembrane helix</keyword>
<evidence type="ECO:0000255" key="1"/>
<evidence type="ECO:0000305" key="2"/>
<feature type="chain" id="PRO_0000284798" description="Transmembrane protein 19">
    <location>
        <begin position="1"/>
        <end position="336"/>
    </location>
</feature>
<feature type="transmembrane region" description="Helical" evidence="1">
    <location>
        <begin position="19"/>
        <end position="39"/>
    </location>
</feature>
<feature type="transmembrane region" description="Helical" evidence="1">
    <location>
        <begin position="49"/>
        <end position="69"/>
    </location>
</feature>
<feature type="transmembrane region" description="Helical" evidence="1">
    <location>
        <begin position="86"/>
        <end position="106"/>
    </location>
</feature>
<feature type="transmembrane region" description="Helical" evidence="1">
    <location>
        <begin position="218"/>
        <end position="238"/>
    </location>
</feature>
<feature type="transmembrane region" description="Helical" evidence="1">
    <location>
        <begin position="250"/>
        <end position="270"/>
    </location>
</feature>
<feature type="transmembrane region" description="Helical" evidence="1">
    <location>
        <begin position="313"/>
        <end position="333"/>
    </location>
</feature>
<reference key="1">
    <citation type="submission" date="2004-05" db="EMBL/GenBank/DDBJ databases">
        <authorList>
            <consortium name="NIH - Xenopus Gene Collection (XGC) project"/>
        </authorList>
    </citation>
    <scope>NUCLEOTIDE SEQUENCE [LARGE SCALE MRNA]</scope>
    <source>
        <tissue>Kidney</tissue>
    </source>
</reference>
<proteinExistence type="evidence at transcript level"/>
<accession>Q6IR76</accession>
<dbReference type="EMBL" id="BC071024">
    <property type="protein sequence ID" value="AAH71024.1"/>
    <property type="molecule type" value="mRNA"/>
</dbReference>
<dbReference type="RefSeq" id="NP_001085034.1">
    <property type="nucleotide sequence ID" value="NM_001091565.1"/>
</dbReference>
<dbReference type="DNASU" id="432101"/>
<dbReference type="GeneID" id="432101"/>
<dbReference type="KEGG" id="xla:432101"/>
<dbReference type="AGR" id="Xenbase:XB-GENE-1013699"/>
<dbReference type="CTD" id="432101"/>
<dbReference type="Xenbase" id="XB-GENE-1013699">
    <property type="gene designation" value="tmem19.L"/>
</dbReference>
<dbReference type="OMA" id="MSSFACC"/>
<dbReference type="OrthoDB" id="30881at2759"/>
<dbReference type="Proteomes" id="UP000186698">
    <property type="component" value="Chromosome 3L"/>
</dbReference>
<dbReference type="Bgee" id="432101">
    <property type="expression patterns" value="Expressed in egg cell and 19 other cell types or tissues"/>
</dbReference>
<dbReference type="GO" id="GO:0016020">
    <property type="term" value="C:membrane"/>
    <property type="evidence" value="ECO:0000318"/>
    <property type="project" value="GO_Central"/>
</dbReference>
<dbReference type="InterPro" id="IPR002794">
    <property type="entry name" value="DUF92_TMEM19"/>
</dbReference>
<dbReference type="PANTHER" id="PTHR13353">
    <property type="entry name" value="TRANSMEMBRANE PROTEIN 19"/>
    <property type="match status" value="1"/>
</dbReference>
<dbReference type="PANTHER" id="PTHR13353:SF5">
    <property type="entry name" value="TRANSMEMBRANE PROTEIN 19"/>
    <property type="match status" value="1"/>
</dbReference>
<dbReference type="Pfam" id="PF01940">
    <property type="entry name" value="DUF92"/>
    <property type="match status" value="1"/>
</dbReference>